<protein>
    <recommendedName>
        <fullName evidence="1">Probable cobalt-precorrin-6B C(15)-methyltransferase (decarboxylating)</fullName>
        <ecNumber evidence="1">2.1.1.196</ecNumber>
    </recommendedName>
</protein>
<dbReference type="EC" id="2.1.1.196" evidence="1"/>
<dbReference type="EMBL" id="BA000023">
    <property type="protein sequence ID" value="BAK54675.1"/>
    <property type="molecule type" value="Genomic_DNA"/>
</dbReference>
<dbReference type="RefSeq" id="WP_010979887.1">
    <property type="nucleotide sequence ID" value="NC_003106.2"/>
</dbReference>
<dbReference type="SMR" id="Q96ZL5"/>
<dbReference type="STRING" id="273063.STK_18190"/>
<dbReference type="GeneID" id="1459875"/>
<dbReference type="KEGG" id="sto:STK_18190"/>
<dbReference type="PATRIC" id="fig|273063.9.peg.2075"/>
<dbReference type="eggNOG" id="arCOG00977">
    <property type="taxonomic scope" value="Archaea"/>
</dbReference>
<dbReference type="OrthoDB" id="6027at2157"/>
<dbReference type="UniPathway" id="UPA00148">
    <property type="reaction ID" value="UER00229"/>
</dbReference>
<dbReference type="Proteomes" id="UP000001015">
    <property type="component" value="Chromosome"/>
</dbReference>
<dbReference type="GO" id="GO:0043776">
    <property type="term" value="F:cobalt-precorrin-6B C5-methyltransferase activity"/>
    <property type="evidence" value="ECO:0007669"/>
    <property type="project" value="RHEA"/>
</dbReference>
<dbReference type="GO" id="GO:0008276">
    <property type="term" value="F:protein methyltransferase activity"/>
    <property type="evidence" value="ECO:0007669"/>
    <property type="project" value="InterPro"/>
</dbReference>
<dbReference type="GO" id="GO:0019251">
    <property type="term" value="P:anaerobic cobalamin biosynthetic process"/>
    <property type="evidence" value="ECO:0007669"/>
    <property type="project" value="UniProtKB-UniRule"/>
</dbReference>
<dbReference type="GO" id="GO:0032259">
    <property type="term" value="P:methylation"/>
    <property type="evidence" value="ECO:0007669"/>
    <property type="project" value="UniProtKB-KW"/>
</dbReference>
<dbReference type="CDD" id="cd02440">
    <property type="entry name" value="AdoMet_MTases"/>
    <property type="match status" value="1"/>
</dbReference>
<dbReference type="Gene3D" id="3.40.50.150">
    <property type="entry name" value="Vaccinia Virus protein VP39"/>
    <property type="match status" value="1"/>
</dbReference>
<dbReference type="HAMAP" id="MF_00786">
    <property type="entry name" value="CbiT"/>
    <property type="match status" value="1"/>
</dbReference>
<dbReference type="InterPro" id="IPR023475">
    <property type="entry name" value="CbiT"/>
</dbReference>
<dbReference type="InterPro" id="IPR014008">
    <property type="entry name" value="Cbl_synth_MTase_CbiT"/>
</dbReference>
<dbReference type="InterPro" id="IPR050714">
    <property type="entry name" value="Cobalamin_biosynth_MTase"/>
</dbReference>
<dbReference type="InterPro" id="IPR025714">
    <property type="entry name" value="Methyltranfer_dom"/>
</dbReference>
<dbReference type="InterPro" id="IPR029063">
    <property type="entry name" value="SAM-dependent_MTases_sf"/>
</dbReference>
<dbReference type="NCBIfam" id="TIGR02469">
    <property type="entry name" value="CbiT"/>
    <property type="match status" value="1"/>
</dbReference>
<dbReference type="NCBIfam" id="NF001556">
    <property type="entry name" value="PRK00377.1"/>
    <property type="match status" value="1"/>
</dbReference>
<dbReference type="PANTHER" id="PTHR43182">
    <property type="entry name" value="COBALT-PRECORRIN-6B C(15)-METHYLTRANSFERASE (DECARBOXYLATING)"/>
    <property type="match status" value="1"/>
</dbReference>
<dbReference type="PANTHER" id="PTHR43182:SF1">
    <property type="entry name" value="COBALT-PRECORRIN-7 C(5)-METHYLTRANSFERASE"/>
    <property type="match status" value="1"/>
</dbReference>
<dbReference type="Pfam" id="PF13847">
    <property type="entry name" value="Methyltransf_31"/>
    <property type="match status" value="1"/>
</dbReference>
<dbReference type="SUPFAM" id="SSF53335">
    <property type="entry name" value="S-adenosyl-L-methionine-dependent methyltransferases"/>
    <property type="match status" value="1"/>
</dbReference>
<feature type="chain" id="PRO_0000134945" description="Probable cobalt-precorrin-6B C(15)-methyltransferase (decarboxylating)">
    <location>
        <begin position="1"/>
        <end position="192"/>
    </location>
</feature>
<feature type="binding site" evidence="1">
    <location>
        <position position="20"/>
    </location>
    <ligand>
        <name>S-adenosyl-L-methionine</name>
        <dbReference type="ChEBI" id="CHEBI:59789"/>
    </ligand>
</feature>
<feature type="binding site" evidence="1">
    <location>
        <begin position="44"/>
        <end position="48"/>
    </location>
    <ligand>
        <name>S-adenosyl-L-methionine</name>
        <dbReference type="ChEBI" id="CHEBI:59789"/>
    </ligand>
</feature>
<feature type="binding site" evidence="1">
    <location>
        <position position="68"/>
    </location>
    <ligand>
        <name>S-adenosyl-L-methionine</name>
        <dbReference type="ChEBI" id="CHEBI:59789"/>
    </ligand>
</feature>
<feature type="binding site" evidence="1">
    <location>
        <position position="96"/>
    </location>
    <ligand>
        <name>S-adenosyl-L-methionine</name>
        <dbReference type="ChEBI" id="CHEBI:59789"/>
    </ligand>
</feature>
<gene>
    <name evidence="1" type="primary">cbiT</name>
    <name type="ordered locus">STK_18190</name>
</gene>
<reference key="1">
    <citation type="journal article" date="2001" name="DNA Res.">
        <title>Complete genome sequence of an aerobic thermoacidophilic Crenarchaeon, Sulfolobus tokodaii strain7.</title>
        <authorList>
            <person name="Kawarabayasi Y."/>
            <person name="Hino Y."/>
            <person name="Horikawa H."/>
            <person name="Jin-no K."/>
            <person name="Takahashi M."/>
            <person name="Sekine M."/>
            <person name="Baba S."/>
            <person name="Ankai A."/>
            <person name="Kosugi H."/>
            <person name="Hosoyama A."/>
            <person name="Fukui S."/>
            <person name="Nagai Y."/>
            <person name="Nishijima K."/>
            <person name="Otsuka R."/>
            <person name="Nakazawa H."/>
            <person name="Takamiya M."/>
            <person name="Kato Y."/>
            <person name="Yoshizawa T."/>
            <person name="Tanaka T."/>
            <person name="Kudoh Y."/>
            <person name="Yamazaki J."/>
            <person name="Kushida N."/>
            <person name="Oguchi A."/>
            <person name="Aoki K."/>
            <person name="Masuda S."/>
            <person name="Yanagii M."/>
            <person name="Nishimura M."/>
            <person name="Yamagishi A."/>
            <person name="Oshima T."/>
            <person name="Kikuchi H."/>
        </authorList>
    </citation>
    <scope>NUCLEOTIDE SEQUENCE [LARGE SCALE GENOMIC DNA]</scope>
    <source>
        <strain>DSM 16993 / JCM 10545 / NBRC 100140 / 7</strain>
    </source>
</reference>
<sequence>MRLPGIPDEEFIRVEKIPMTKEEIRVLALSKARLFDGAKFIDIGSGTGSVTVEAGLVVGEKGKVWAIEKDKDAVELTKKNVEKFKLNNVVIIEGEAPEALDHVDSEVDAIFIGGTERLEEILLSSDKKLKNGGRIVIDAILLETVNKALSTLNQMGYKTDVIEVIIAKGMKTSKGYAMISRNPIFIVYGEKP</sequence>
<proteinExistence type="inferred from homology"/>
<name>CBIT_SULTO</name>
<comment type="function">
    <text evidence="1">Catalyzes the methylation of C-15 in cobalt-precorrin-6B followed by the decarboxylation of C-12 to form cobalt-precorrin-7.</text>
</comment>
<comment type="catalytic activity">
    <reaction evidence="1">
        <text>Co-precorrin-6B + S-adenosyl-L-methionine = Co-precorrin-7 + S-adenosyl-L-homocysteine + CO2</text>
        <dbReference type="Rhea" id="RHEA:36067"/>
        <dbReference type="ChEBI" id="CHEBI:16526"/>
        <dbReference type="ChEBI" id="CHEBI:57856"/>
        <dbReference type="ChEBI" id="CHEBI:59789"/>
        <dbReference type="ChEBI" id="CHEBI:70791"/>
        <dbReference type="ChEBI" id="CHEBI:72780"/>
        <dbReference type="EC" id="2.1.1.196"/>
    </reaction>
</comment>
<comment type="pathway">
    <text evidence="1">Cofactor biosynthesis; adenosylcobalamin biosynthesis; cob(II)yrinate a,c-diamide from sirohydrochlorin (anaerobic route): step 8/10.</text>
</comment>
<comment type="similarity">
    <text evidence="1">Belongs to the methyltransferase superfamily. Archaeal-type CbiT family.</text>
</comment>
<evidence type="ECO:0000255" key="1">
    <source>
        <dbReference type="HAMAP-Rule" id="MF_00786"/>
    </source>
</evidence>
<keyword id="KW-0169">Cobalamin biosynthesis</keyword>
<keyword id="KW-0489">Methyltransferase</keyword>
<keyword id="KW-1185">Reference proteome</keyword>
<keyword id="KW-0949">S-adenosyl-L-methionine</keyword>
<keyword id="KW-0808">Transferase</keyword>
<organism>
    <name type="scientific">Sulfurisphaera tokodaii (strain DSM 16993 / JCM 10545 / NBRC 100140 / 7)</name>
    <name type="common">Sulfolobus tokodaii</name>
    <dbReference type="NCBI Taxonomy" id="273063"/>
    <lineage>
        <taxon>Archaea</taxon>
        <taxon>Thermoproteota</taxon>
        <taxon>Thermoprotei</taxon>
        <taxon>Sulfolobales</taxon>
        <taxon>Sulfolobaceae</taxon>
        <taxon>Sulfurisphaera</taxon>
    </lineage>
</organism>
<accession>Q96ZL5</accession>
<accession>F9VNM9</accession>